<evidence type="ECO:0000255" key="1">
    <source>
        <dbReference type="HAMAP-Rule" id="MF_01290"/>
    </source>
</evidence>
<name>RHMA_SALPK</name>
<accession>B5BCQ6</accession>
<proteinExistence type="inferred from homology"/>
<dbReference type="EC" id="4.1.2.53" evidence="1"/>
<dbReference type="EMBL" id="FM200053">
    <property type="protein sequence ID" value="CAR58667.1"/>
    <property type="molecule type" value="Genomic_DNA"/>
</dbReference>
<dbReference type="SMR" id="B5BCQ6"/>
<dbReference type="KEGG" id="sek:SSPA0538"/>
<dbReference type="HOGENOM" id="CLU_059964_1_0_6"/>
<dbReference type="Proteomes" id="UP000001869">
    <property type="component" value="Chromosome"/>
</dbReference>
<dbReference type="GO" id="GO:0005737">
    <property type="term" value="C:cytoplasm"/>
    <property type="evidence" value="ECO:0007669"/>
    <property type="project" value="TreeGrafter"/>
</dbReference>
<dbReference type="GO" id="GO:0106099">
    <property type="term" value="F:2-keto-3-deoxy-L-rhamnonate aldolase activity"/>
    <property type="evidence" value="ECO:0007669"/>
    <property type="project" value="UniProtKB-EC"/>
</dbReference>
<dbReference type="GO" id="GO:0000287">
    <property type="term" value="F:magnesium ion binding"/>
    <property type="evidence" value="ECO:0007669"/>
    <property type="project" value="UniProtKB-UniRule"/>
</dbReference>
<dbReference type="FunFam" id="3.20.20.60:FF:000004">
    <property type="entry name" value="5-keto-4-deoxy-D-glucarate aldolase"/>
    <property type="match status" value="1"/>
</dbReference>
<dbReference type="Gene3D" id="3.20.20.60">
    <property type="entry name" value="Phosphoenolpyruvate-binding domains"/>
    <property type="match status" value="1"/>
</dbReference>
<dbReference type="HAMAP" id="MF_01290">
    <property type="entry name" value="KDR_aldolase"/>
    <property type="match status" value="1"/>
</dbReference>
<dbReference type="InterPro" id="IPR005000">
    <property type="entry name" value="Aldolase/citrate-lyase_domain"/>
</dbReference>
<dbReference type="InterPro" id="IPR050251">
    <property type="entry name" value="HpcH-HpaI_aldolase"/>
</dbReference>
<dbReference type="InterPro" id="IPR023593">
    <property type="entry name" value="KDR_aldolase"/>
</dbReference>
<dbReference type="InterPro" id="IPR015813">
    <property type="entry name" value="Pyrv/PenolPyrv_kinase-like_dom"/>
</dbReference>
<dbReference type="InterPro" id="IPR040442">
    <property type="entry name" value="Pyrv_kinase-like_dom_sf"/>
</dbReference>
<dbReference type="NCBIfam" id="NF007521">
    <property type="entry name" value="PRK10128.1"/>
    <property type="match status" value="1"/>
</dbReference>
<dbReference type="PANTHER" id="PTHR30502">
    <property type="entry name" value="2-KETO-3-DEOXY-L-RHAMNONATE ALDOLASE"/>
    <property type="match status" value="1"/>
</dbReference>
<dbReference type="PANTHER" id="PTHR30502:SF5">
    <property type="entry name" value="2-KETO-3-DEOXY-L-RHAMNONATE ALDOLASE"/>
    <property type="match status" value="1"/>
</dbReference>
<dbReference type="Pfam" id="PF03328">
    <property type="entry name" value="HpcH_HpaI"/>
    <property type="match status" value="1"/>
</dbReference>
<dbReference type="SUPFAM" id="SSF51621">
    <property type="entry name" value="Phosphoenolpyruvate/pyruvate domain"/>
    <property type="match status" value="1"/>
</dbReference>
<keyword id="KW-0456">Lyase</keyword>
<keyword id="KW-0460">Magnesium</keyword>
<keyword id="KW-0479">Metal-binding</keyword>
<protein>
    <recommendedName>
        <fullName evidence="1">2-keto-3-deoxy-L-rhamnonate aldolase</fullName>
        <shortName evidence="1">KDR aldolase</shortName>
        <ecNumber evidence="1">4.1.2.53</ecNumber>
    </recommendedName>
    <alternativeName>
        <fullName evidence="1">2-dehydro-3-deoxyrhamnonate aldolase</fullName>
    </alternativeName>
</protein>
<feature type="chain" id="PRO_1000140402" description="2-keto-3-deoxy-L-rhamnonate aldolase">
    <location>
        <begin position="1"/>
        <end position="267"/>
    </location>
</feature>
<feature type="active site" description="Proton acceptor" evidence="1">
    <location>
        <position position="49"/>
    </location>
</feature>
<feature type="binding site" evidence="1">
    <location>
        <position position="151"/>
    </location>
    <ligand>
        <name>substrate</name>
    </ligand>
</feature>
<feature type="binding site" evidence="1">
    <location>
        <position position="153"/>
    </location>
    <ligand>
        <name>Mg(2+)</name>
        <dbReference type="ChEBI" id="CHEBI:18420"/>
    </ligand>
</feature>
<feature type="binding site" evidence="1">
    <location>
        <position position="178"/>
    </location>
    <ligand>
        <name>substrate</name>
    </ligand>
</feature>
<feature type="binding site" evidence="1">
    <location>
        <position position="179"/>
    </location>
    <ligand>
        <name>Mg(2+)</name>
        <dbReference type="ChEBI" id="CHEBI:18420"/>
    </ligand>
</feature>
<feature type="binding site" evidence="1">
    <location>
        <position position="179"/>
    </location>
    <ligand>
        <name>substrate</name>
    </ligand>
</feature>
<feature type="site" description="Transition state stabilizer" evidence="1">
    <location>
        <position position="74"/>
    </location>
</feature>
<feature type="site" description="Increases basicity of active site His" evidence="1">
    <location>
        <position position="88"/>
    </location>
</feature>
<comment type="function">
    <text evidence="1">Catalyzes the reversible retro-aldol cleavage of 2-keto-3-deoxy-L-rhamnonate (KDR) to pyruvate and lactaldehyde.</text>
</comment>
<comment type="catalytic activity">
    <reaction evidence="1">
        <text>2-dehydro-3-deoxy-L-rhamnonate = (S)-lactaldehyde + pyruvate</text>
        <dbReference type="Rhea" id="RHEA:25784"/>
        <dbReference type="ChEBI" id="CHEBI:15361"/>
        <dbReference type="ChEBI" id="CHEBI:18041"/>
        <dbReference type="ChEBI" id="CHEBI:58371"/>
        <dbReference type="EC" id="4.1.2.53"/>
    </reaction>
</comment>
<comment type="cofactor">
    <cofactor evidence="1">
        <name>Mg(2+)</name>
        <dbReference type="ChEBI" id="CHEBI:18420"/>
    </cofactor>
    <text evidence="1">Binds 1 Mg(2+) ion per subunit.</text>
</comment>
<comment type="subunit">
    <text evidence="1">Homohexamer.</text>
</comment>
<comment type="similarity">
    <text evidence="1">Belongs to the HpcH/HpaI aldolase family. KDR aldolase subfamily.</text>
</comment>
<sequence>MNALLSNPFKEGLRKGDTQIGLWLSSTTSYMAEIAATSGYDWLLIDGEHAPNTVQDLYHQLQAIAPYASQPVIRPIEGSKALIKQVLDIGAQTLLIPMVDTAEQARQVVSATRYPPLGQRGVGASVARAARWGRIDNYMAQANESLCLLVQVESKVALENLDAILEVEGIDGVFIGPADLSASLGYPDNAGHPEVQRIIEACIYRIRAAGKAAGFLAVDPAMAQKCLAWGANFVAVGVDTMLYTEALDNRLVMFKSVQSVSTAKRSY</sequence>
<gene>
    <name evidence="1" type="primary">rhmA</name>
    <name type="ordered locus">SSPA0538</name>
</gene>
<organism>
    <name type="scientific">Salmonella paratyphi A (strain AKU_12601)</name>
    <dbReference type="NCBI Taxonomy" id="554290"/>
    <lineage>
        <taxon>Bacteria</taxon>
        <taxon>Pseudomonadati</taxon>
        <taxon>Pseudomonadota</taxon>
        <taxon>Gammaproteobacteria</taxon>
        <taxon>Enterobacterales</taxon>
        <taxon>Enterobacteriaceae</taxon>
        <taxon>Salmonella</taxon>
    </lineage>
</organism>
<reference key="1">
    <citation type="journal article" date="2009" name="BMC Genomics">
        <title>Pseudogene accumulation in the evolutionary histories of Salmonella enterica serovars Paratyphi A and Typhi.</title>
        <authorList>
            <person name="Holt K.E."/>
            <person name="Thomson N.R."/>
            <person name="Wain J."/>
            <person name="Langridge G.C."/>
            <person name="Hasan R."/>
            <person name="Bhutta Z.A."/>
            <person name="Quail M.A."/>
            <person name="Norbertczak H."/>
            <person name="Walker D."/>
            <person name="Simmonds M."/>
            <person name="White B."/>
            <person name="Bason N."/>
            <person name="Mungall K."/>
            <person name="Dougan G."/>
            <person name="Parkhill J."/>
        </authorList>
    </citation>
    <scope>NUCLEOTIDE SEQUENCE [LARGE SCALE GENOMIC DNA]</scope>
    <source>
        <strain>AKU_12601</strain>
    </source>
</reference>